<reference evidence="4" key="1">
    <citation type="journal article" date="2005" name="Peptides">
        <title>Peptidomics of neurohemal organs from species of the cockroach family Blattidae: how do neuropeptides of closely related species differ?</title>
        <authorList>
            <person name="Predel R."/>
            <person name="Gaede G."/>
        </authorList>
    </citation>
    <scope>PROTEIN SEQUENCE</scope>
    <scope>MASS SPECTROMETRY</scope>
    <scope>AMIDATION AT VAL-11</scope>
    <source>
        <tissue evidence="2">Abdominal perisympathetic organs</tissue>
    </source>
</reference>
<reference key="2">
    <citation type="journal article" date="2009" name="BMC Evol. Biol.">
        <title>A proteomic approach for studying insect phylogeny: CAPA peptides of ancient insect taxa (Dictyoptera, Blattoptera) as a test case.</title>
        <authorList>
            <person name="Roth S."/>
            <person name="Fromm B."/>
            <person name="Gaede G."/>
            <person name="Predel R."/>
        </authorList>
    </citation>
    <scope>PROTEIN SEQUENCE</scope>
    <scope>AMIDATION AT VAL-11</scope>
    <source>
        <tissue>Abdominal perisympathetic organs</tissue>
    </source>
</reference>
<dbReference type="GO" id="GO:0005576">
    <property type="term" value="C:extracellular region"/>
    <property type="evidence" value="ECO:0007669"/>
    <property type="project" value="UniProtKB-SubCell"/>
</dbReference>
<dbReference type="GO" id="GO:0007218">
    <property type="term" value="P:neuropeptide signaling pathway"/>
    <property type="evidence" value="ECO:0007669"/>
    <property type="project" value="UniProtKB-KW"/>
</dbReference>
<dbReference type="InterPro" id="IPR013231">
    <property type="entry name" value="Periviscerokinin"/>
</dbReference>
<dbReference type="Pfam" id="PF08259">
    <property type="entry name" value="Periviscerokin"/>
    <property type="match status" value="1"/>
</dbReference>
<evidence type="ECO:0000255" key="1"/>
<evidence type="ECO:0000269" key="2">
    <source>
    </source>
</evidence>
<evidence type="ECO:0000269" key="3">
    <source>
    </source>
</evidence>
<evidence type="ECO:0000305" key="4"/>
<sequence length="11" mass="1103">GSSGLISMPRV</sequence>
<accession>P84434</accession>
<organism>
    <name type="scientific">Pseudoderopeltis cf. bimaculata JT-2004</name>
    <name type="common">Harlequin cockroach</name>
    <dbReference type="NCBI Taxonomy" id="304880"/>
    <lineage>
        <taxon>Eukaryota</taxon>
        <taxon>Metazoa</taxon>
        <taxon>Ecdysozoa</taxon>
        <taxon>Arthropoda</taxon>
        <taxon>Hexapoda</taxon>
        <taxon>Insecta</taxon>
        <taxon>Pterygota</taxon>
        <taxon>Neoptera</taxon>
        <taxon>Polyneoptera</taxon>
        <taxon>Dictyoptera</taxon>
        <taxon>Blattodea</taxon>
        <taxon>Blattoidea</taxon>
        <taxon>Blattidae</taxon>
        <taxon>Blattinae</taxon>
        <taxon>Pseudoderopeltis</taxon>
    </lineage>
</organism>
<proteinExistence type="evidence at protein level"/>
<comment type="function">
    <text evidence="4">Mediates visceral muscle contractile activity (myotropic activity).</text>
</comment>
<comment type="subcellular location">
    <subcellularLocation>
        <location evidence="4">Secreted</location>
    </subcellularLocation>
</comment>
<comment type="mass spectrometry" mass="1102.6" method="MALDI" evidence="2"/>
<comment type="similarity">
    <text evidence="1">Belongs to the periviscerokinin family.</text>
</comment>
<feature type="peptide" id="PRO_0000044277" description="Periviscerokinin-2.2">
    <location>
        <begin position="1"/>
        <end position="11"/>
    </location>
</feature>
<feature type="modified residue" description="Valine amide" evidence="2 3">
    <location>
        <position position="11"/>
    </location>
</feature>
<name>PVK22_PSEBJ</name>
<protein>
    <recommendedName>
        <fullName>Periviscerokinin-2.2</fullName>
    </recommendedName>
    <alternativeName>
        <fullName>Lem-PVK-2-like peptide</fullName>
    </alternativeName>
    <alternativeName>
        <fullName>Periviscerokinin-2</fullName>
        <shortName>PseBi-PVK-2</shortName>
    </alternativeName>
</protein>
<keyword id="KW-0027">Amidation</keyword>
<keyword id="KW-0903">Direct protein sequencing</keyword>
<keyword id="KW-0527">Neuropeptide</keyword>
<keyword id="KW-0964">Secreted</keyword>